<feature type="chain" id="PRO_0000107768" description="Nucleotide-binding protein SCO1952">
    <location>
        <begin position="1"/>
        <end position="299"/>
    </location>
</feature>
<feature type="binding site" evidence="1">
    <location>
        <begin position="23"/>
        <end position="30"/>
    </location>
    <ligand>
        <name>ATP</name>
        <dbReference type="ChEBI" id="CHEBI:30616"/>
    </ligand>
</feature>
<feature type="binding site" evidence="1">
    <location>
        <begin position="74"/>
        <end position="77"/>
    </location>
    <ligand>
        <name>GTP</name>
        <dbReference type="ChEBI" id="CHEBI:37565"/>
    </ligand>
</feature>
<comment type="function">
    <text evidence="1">Displays ATPase and GTPase activities.</text>
</comment>
<comment type="similarity">
    <text evidence="1">Belongs to the RapZ-like family.</text>
</comment>
<comment type="sequence caution" evidence="2">
    <conflict type="erroneous initiation">
        <sequence resource="EMBL-CDS" id="AAD42167"/>
    </conflict>
</comment>
<comment type="sequence caution" evidence="2">
    <conflict type="erroneous initiation">
        <sequence resource="EMBL-CDS" id="CAB38142"/>
    </conflict>
</comment>
<dbReference type="EMBL" id="AF106003">
    <property type="protein sequence ID" value="AAD42167.1"/>
    <property type="status" value="ALT_INIT"/>
    <property type="molecule type" value="Genomic_DNA"/>
</dbReference>
<dbReference type="EMBL" id="AL939110">
    <property type="protein sequence ID" value="CAB38142.1"/>
    <property type="status" value="ALT_INIT"/>
    <property type="molecule type" value="Genomic_DNA"/>
</dbReference>
<dbReference type="PIR" id="T36025">
    <property type="entry name" value="T36025"/>
</dbReference>
<dbReference type="RefSeq" id="NP_626216.1">
    <property type="nucleotide sequence ID" value="NC_003888.3"/>
</dbReference>
<dbReference type="SMR" id="Q9Z513"/>
<dbReference type="FunCoup" id="Q9Z513">
    <property type="interactions" value="23"/>
</dbReference>
<dbReference type="STRING" id="100226.gene:17759549"/>
<dbReference type="PaxDb" id="100226-SCO1952"/>
<dbReference type="KEGG" id="sco:SCO1952"/>
<dbReference type="PATRIC" id="fig|100226.15.peg.1978"/>
<dbReference type="eggNOG" id="COG1660">
    <property type="taxonomic scope" value="Bacteria"/>
</dbReference>
<dbReference type="HOGENOM" id="CLU_059558_0_0_11"/>
<dbReference type="InParanoid" id="Q9Z513"/>
<dbReference type="OrthoDB" id="9784461at2"/>
<dbReference type="PhylomeDB" id="Q9Z513"/>
<dbReference type="Proteomes" id="UP000001973">
    <property type="component" value="Chromosome"/>
</dbReference>
<dbReference type="GO" id="GO:0005524">
    <property type="term" value="F:ATP binding"/>
    <property type="evidence" value="ECO:0007669"/>
    <property type="project" value="UniProtKB-UniRule"/>
</dbReference>
<dbReference type="GO" id="GO:0005525">
    <property type="term" value="F:GTP binding"/>
    <property type="evidence" value="ECO:0007669"/>
    <property type="project" value="UniProtKB-UniRule"/>
</dbReference>
<dbReference type="GO" id="GO:0060090">
    <property type="term" value="F:molecular adaptor activity"/>
    <property type="evidence" value="ECO:0000318"/>
    <property type="project" value="GO_Central"/>
</dbReference>
<dbReference type="Gene3D" id="3.40.50.300">
    <property type="entry name" value="P-loop containing nucleotide triphosphate hydrolases"/>
    <property type="match status" value="1"/>
</dbReference>
<dbReference type="HAMAP" id="MF_00636">
    <property type="entry name" value="RapZ_like"/>
    <property type="match status" value="1"/>
</dbReference>
<dbReference type="InterPro" id="IPR027417">
    <property type="entry name" value="P-loop_NTPase"/>
</dbReference>
<dbReference type="InterPro" id="IPR005337">
    <property type="entry name" value="RapZ-like"/>
</dbReference>
<dbReference type="InterPro" id="IPR053930">
    <property type="entry name" value="RapZ-like_N"/>
</dbReference>
<dbReference type="InterPro" id="IPR053931">
    <property type="entry name" value="RapZ_C"/>
</dbReference>
<dbReference type="NCBIfam" id="NF003828">
    <property type="entry name" value="PRK05416.1"/>
    <property type="match status" value="1"/>
</dbReference>
<dbReference type="PANTHER" id="PTHR30448">
    <property type="entry name" value="RNASE ADAPTER PROTEIN RAPZ"/>
    <property type="match status" value="1"/>
</dbReference>
<dbReference type="PANTHER" id="PTHR30448:SF0">
    <property type="entry name" value="RNASE ADAPTER PROTEIN RAPZ"/>
    <property type="match status" value="1"/>
</dbReference>
<dbReference type="Pfam" id="PF22740">
    <property type="entry name" value="PapZ_C"/>
    <property type="match status" value="1"/>
</dbReference>
<dbReference type="Pfam" id="PF03668">
    <property type="entry name" value="RapZ-like_N"/>
    <property type="match status" value="1"/>
</dbReference>
<dbReference type="PIRSF" id="PIRSF005052">
    <property type="entry name" value="P-loopkin"/>
    <property type="match status" value="1"/>
</dbReference>
<dbReference type="SUPFAM" id="SSF52540">
    <property type="entry name" value="P-loop containing nucleoside triphosphate hydrolases"/>
    <property type="match status" value="1"/>
</dbReference>
<name>Y1952_STRCO</name>
<sequence length="299" mass="32821">MSTGKETAGAHEAAIPELVIISGMSGAGRSTAAKCLEDLGWFVVDNLPPALIPTMVELGARSQGNVARIAVVVDVRGRRFFDNLRESLADLDARGVTRRIVFLESSDDALVRRFESVRRPHPLQGDGRIVDGIAAERELLRELRGDADLVIDTSSLNVHELRAKMDAQFAGDQEPELRATVMSFGFKYGLPVDADLVVDMRFLPNPHWVPELRPFTGLNEEVSSYVLNQPGAKEFLDRYAELLQLIAAGYRREGKRYVTVAVGCTGGKHRSVAMSEKLAARLAAEGVETVVVHRDMGRE</sequence>
<keyword id="KW-0067">ATP-binding</keyword>
<keyword id="KW-0342">GTP-binding</keyword>
<keyword id="KW-0547">Nucleotide-binding</keyword>
<keyword id="KW-1185">Reference proteome</keyword>
<accession>Q9Z513</accession>
<organism>
    <name type="scientific">Streptomyces coelicolor (strain ATCC BAA-471 / A3(2) / M145)</name>
    <dbReference type="NCBI Taxonomy" id="100226"/>
    <lineage>
        <taxon>Bacteria</taxon>
        <taxon>Bacillati</taxon>
        <taxon>Actinomycetota</taxon>
        <taxon>Actinomycetes</taxon>
        <taxon>Kitasatosporales</taxon>
        <taxon>Streptomycetaceae</taxon>
        <taxon>Streptomyces</taxon>
        <taxon>Streptomyces albidoflavus group</taxon>
    </lineage>
</organism>
<proteinExistence type="inferred from homology"/>
<reference key="1">
    <citation type="submission" date="1998-11" db="EMBL/GenBank/DDBJ databases">
        <title>The whiA sporulation regulatory gene of Streptomyces coelicolor A3(2).</title>
        <authorList>
            <person name="Ryding N.J."/>
            <person name="Ainsa J.A."/>
            <person name="Hartley N."/>
            <person name="Bruton C.J."/>
            <person name="Chater K.F."/>
        </authorList>
    </citation>
    <scope>NUCLEOTIDE SEQUENCE [GENOMIC DNA]</scope>
    <source>
        <strain>A3(2) / NRRL B-16638</strain>
    </source>
</reference>
<reference key="2">
    <citation type="journal article" date="2002" name="Nature">
        <title>Complete genome sequence of the model actinomycete Streptomyces coelicolor A3(2).</title>
        <authorList>
            <person name="Bentley S.D."/>
            <person name="Chater K.F."/>
            <person name="Cerdeno-Tarraga A.-M."/>
            <person name="Challis G.L."/>
            <person name="Thomson N.R."/>
            <person name="James K.D."/>
            <person name="Harris D.E."/>
            <person name="Quail M.A."/>
            <person name="Kieser H."/>
            <person name="Harper D."/>
            <person name="Bateman A."/>
            <person name="Brown S."/>
            <person name="Chandra G."/>
            <person name="Chen C.W."/>
            <person name="Collins M."/>
            <person name="Cronin A."/>
            <person name="Fraser A."/>
            <person name="Goble A."/>
            <person name="Hidalgo J."/>
            <person name="Hornsby T."/>
            <person name="Howarth S."/>
            <person name="Huang C.-H."/>
            <person name="Kieser T."/>
            <person name="Larke L."/>
            <person name="Murphy L.D."/>
            <person name="Oliver K."/>
            <person name="O'Neil S."/>
            <person name="Rabbinowitsch E."/>
            <person name="Rajandream M.A."/>
            <person name="Rutherford K.M."/>
            <person name="Rutter S."/>
            <person name="Seeger K."/>
            <person name="Saunders D."/>
            <person name="Sharp S."/>
            <person name="Squares R."/>
            <person name="Squares S."/>
            <person name="Taylor K."/>
            <person name="Warren T."/>
            <person name="Wietzorrek A."/>
            <person name="Woodward J.R."/>
            <person name="Barrell B.G."/>
            <person name="Parkhill J."/>
            <person name="Hopwood D.A."/>
        </authorList>
    </citation>
    <scope>NUCLEOTIDE SEQUENCE [LARGE SCALE GENOMIC DNA]</scope>
    <source>
        <strain>ATCC BAA-471 / A3(2) / M145</strain>
    </source>
</reference>
<protein>
    <recommendedName>
        <fullName evidence="1">Nucleotide-binding protein SCO1952</fullName>
    </recommendedName>
</protein>
<evidence type="ECO:0000255" key="1">
    <source>
        <dbReference type="HAMAP-Rule" id="MF_00636"/>
    </source>
</evidence>
<evidence type="ECO:0000305" key="2"/>
<gene>
    <name type="ordered locus">SCO1952</name>
    <name type="ORF">SCC54.12c</name>
</gene>